<gene>
    <name type="ordered locus">BQ2027_MB3436C</name>
</gene>
<evidence type="ECO:0000250" key="1"/>
<evidence type="ECO:0000305" key="2"/>
<accession>Q7TWJ6</accession>
<accession>A0A1R3Y449</accession>
<accession>X2BN57</accession>
<feature type="chain" id="PRO_0000259893" description="Protein Mb3436c">
    <location>
        <begin position="1"/>
        <end position="412"/>
    </location>
</feature>
<feature type="modified residue" description="N6-(pyridoxal phosphate)lysine" evidence="1">
    <location>
        <position position="227"/>
    </location>
</feature>
<sequence>MKIRTLSGSVLEPPSAVRATPGTSMLKLEPGGSTIPKIPFIRPSFPGPAELAEDFVQIAQANWYTNFGPNERRFARALRDYLGPHLHVATLANGTLALLAALHVSFGAGTRDRYLLMPSFTFVGVAQAALWTGYRPWFIDIDANTWQPCVHSACAVIERFRDRIAGILLANVFGVGNPQISVWEELAAEWELPIVLDSAAGFGSTYADGERLGGRGACEIFSFHATKPFAVGEGGALVSRDPRLVEHAYKFQNFGLVQTRESIQLGMNGKLSEISAAIGLRQLVGLDRRLASRRKVLECYRTGMADAGVRFQDNANVASLCFASACCTSADHKAAVLGSLRRHAIEARDYYNPPQHRHPYFVTNAELVESTDLAVTADICSRIVSLPVHDHMAPDDVARVVAAVQEAEVRGE</sequence>
<dbReference type="EMBL" id="LT708304">
    <property type="protein sequence ID" value="SIU02064.1"/>
    <property type="status" value="ALT_SEQ"/>
    <property type="molecule type" value="Genomic_DNA"/>
</dbReference>
<dbReference type="RefSeq" id="NP_857076.1">
    <property type="nucleotide sequence ID" value="NC_002945.3"/>
</dbReference>
<dbReference type="SMR" id="Q7TWJ6"/>
<dbReference type="KEGG" id="mbo:BQ2027_MB3436C"/>
<dbReference type="PATRIC" id="fig|233413.5.peg.3771"/>
<dbReference type="Proteomes" id="UP000001419">
    <property type="component" value="Chromosome"/>
</dbReference>
<dbReference type="GO" id="GO:0030170">
    <property type="term" value="F:pyridoxal phosphate binding"/>
    <property type="evidence" value="ECO:0007669"/>
    <property type="project" value="TreeGrafter"/>
</dbReference>
<dbReference type="GO" id="GO:0008483">
    <property type="term" value="F:transaminase activity"/>
    <property type="evidence" value="ECO:0007669"/>
    <property type="project" value="TreeGrafter"/>
</dbReference>
<dbReference type="GO" id="GO:0000271">
    <property type="term" value="P:polysaccharide biosynthetic process"/>
    <property type="evidence" value="ECO:0007669"/>
    <property type="project" value="TreeGrafter"/>
</dbReference>
<dbReference type="CDD" id="cd00616">
    <property type="entry name" value="AHBA_syn"/>
    <property type="match status" value="1"/>
</dbReference>
<dbReference type="Gene3D" id="3.40.640.10">
    <property type="entry name" value="Type I PLP-dependent aspartate aminotransferase-like (Major domain)"/>
    <property type="match status" value="1"/>
</dbReference>
<dbReference type="InterPro" id="IPR000653">
    <property type="entry name" value="DegT/StrS_aminotransferase"/>
</dbReference>
<dbReference type="InterPro" id="IPR015424">
    <property type="entry name" value="PyrdxlP-dep_Trfase"/>
</dbReference>
<dbReference type="InterPro" id="IPR015421">
    <property type="entry name" value="PyrdxlP-dep_Trfase_major"/>
</dbReference>
<dbReference type="PANTHER" id="PTHR30244:SF9">
    <property type="entry name" value="PROTEIN RV3402C"/>
    <property type="match status" value="1"/>
</dbReference>
<dbReference type="PANTHER" id="PTHR30244">
    <property type="entry name" value="TRANSAMINASE"/>
    <property type="match status" value="1"/>
</dbReference>
<dbReference type="Pfam" id="PF01041">
    <property type="entry name" value="DegT_DnrJ_EryC1"/>
    <property type="match status" value="1"/>
</dbReference>
<dbReference type="PIRSF" id="PIRSF000390">
    <property type="entry name" value="PLP_StrS"/>
    <property type="match status" value="1"/>
</dbReference>
<dbReference type="SUPFAM" id="SSF53383">
    <property type="entry name" value="PLP-dependent transferases"/>
    <property type="match status" value="1"/>
</dbReference>
<name>Y3436_MYCBO</name>
<protein>
    <recommendedName>
        <fullName>Protein Mb3436c</fullName>
    </recommendedName>
</protein>
<organism>
    <name type="scientific">Mycobacterium bovis (strain ATCC BAA-935 / AF2122/97)</name>
    <dbReference type="NCBI Taxonomy" id="233413"/>
    <lineage>
        <taxon>Bacteria</taxon>
        <taxon>Bacillati</taxon>
        <taxon>Actinomycetota</taxon>
        <taxon>Actinomycetes</taxon>
        <taxon>Mycobacteriales</taxon>
        <taxon>Mycobacteriaceae</taxon>
        <taxon>Mycobacterium</taxon>
        <taxon>Mycobacterium tuberculosis complex</taxon>
    </lineage>
</organism>
<proteinExistence type="inferred from homology"/>
<keyword id="KW-0663">Pyridoxal phosphate</keyword>
<keyword id="KW-1185">Reference proteome</keyword>
<reference key="1">
    <citation type="journal article" date="2003" name="Proc. Natl. Acad. Sci. U.S.A.">
        <title>The complete genome sequence of Mycobacterium bovis.</title>
        <authorList>
            <person name="Garnier T."/>
            <person name="Eiglmeier K."/>
            <person name="Camus J.-C."/>
            <person name="Medina N."/>
            <person name="Mansoor H."/>
            <person name="Pryor M."/>
            <person name="Duthoy S."/>
            <person name="Grondin S."/>
            <person name="Lacroix C."/>
            <person name="Monsempe C."/>
            <person name="Simon S."/>
            <person name="Harris B."/>
            <person name="Atkin R."/>
            <person name="Doggett J."/>
            <person name="Mayes R."/>
            <person name="Keating L."/>
            <person name="Wheeler P.R."/>
            <person name="Parkhill J."/>
            <person name="Barrell B.G."/>
            <person name="Cole S.T."/>
            <person name="Gordon S.V."/>
            <person name="Hewinson R.G."/>
        </authorList>
    </citation>
    <scope>NUCLEOTIDE SEQUENCE [LARGE SCALE GENOMIC DNA]</scope>
    <source>
        <strain>ATCC BAA-935 / AF2122/97</strain>
    </source>
</reference>
<reference key="2">
    <citation type="journal article" date="2017" name="Genome Announc.">
        <title>Updated reference genome sequence and annotation of Mycobacterium bovis AF2122/97.</title>
        <authorList>
            <person name="Malone K.M."/>
            <person name="Farrell D."/>
            <person name="Stuber T.P."/>
            <person name="Schubert O.T."/>
            <person name="Aebersold R."/>
            <person name="Robbe-Austerman S."/>
            <person name="Gordon S.V."/>
        </authorList>
    </citation>
    <scope>NUCLEOTIDE SEQUENCE [LARGE SCALE GENOMIC DNA]</scope>
    <scope>GENOME REANNOTATION</scope>
    <source>
        <strain>ATCC BAA-935 / AF2122/97</strain>
    </source>
</reference>
<comment type="similarity">
    <text evidence="2">Belongs to the DegT/DnrJ/EryC1 family.</text>
</comment>
<comment type="sequence caution" evidence="2">
    <conflict type="erroneous termination">
        <sequence resource="EMBL-CDS" id="SIU02064"/>
    </conflict>
    <text>Truncated C-terminus.</text>
</comment>